<dbReference type="EMBL" id="Z99494">
    <property type="protein sequence ID" value="CAB16701.1"/>
    <property type="molecule type" value="Genomic_DNA"/>
</dbReference>
<dbReference type="EMBL" id="AL583924">
    <property type="protein sequence ID" value="CAC31078.1"/>
    <property type="molecule type" value="Genomic_DNA"/>
</dbReference>
<dbReference type="EMBL" id="U15184">
    <property type="protein sequence ID" value="AAA63079.1"/>
    <property type="molecule type" value="Genomic_DNA"/>
</dbReference>
<dbReference type="PIR" id="T45359">
    <property type="entry name" value="T45359"/>
</dbReference>
<dbReference type="RefSeq" id="NP_302402.1">
    <property type="nucleotide sequence ID" value="NC_002677.1"/>
</dbReference>
<dbReference type="SMR" id="Q50136"/>
<dbReference type="STRING" id="272631.gene:17575976"/>
<dbReference type="KEGG" id="mle:ML2123"/>
<dbReference type="PATRIC" id="fig|272631.5.peg.4009"/>
<dbReference type="Leproma" id="ML2123"/>
<dbReference type="eggNOG" id="COG0745">
    <property type="taxonomic scope" value="Bacteria"/>
</dbReference>
<dbReference type="HOGENOM" id="CLU_000445_30_1_11"/>
<dbReference type="OrthoDB" id="4760923at2"/>
<dbReference type="Proteomes" id="UP000000806">
    <property type="component" value="Chromosome"/>
</dbReference>
<dbReference type="GO" id="GO:0005829">
    <property type="term" value="C:cytosol"/>
    <property type="evidence" value="ECO:0007669"/>
    <property type="project" value="TreeGrafter"/>
</dbReference>
<dbReference type="GO" id="GO:0032993">
    <property type="term" value="C:protein-DNA complex"/>
    <property type="evidence" value="ECO:0007669"/>
    <property type="project" value="TreeGrafter"/>
</dbReference>
<dbReference type="GO" id="GO:0000156">
    <property type="term" value="F:phosphorelay response regulator activity"/>
    <property type="evidence" value="ECO:0007669"/>
    <property type="project" value="TreeGrafter"/>
</dbReference>
<dbReference type="GO" id="GO:0000976">
    <property type="term" value="F:transcription cis-regulatory region binding"/>
    <property type="evidence" value="ECO:0007669"/>
    <property type="project" value="TreeGrafter"/>
</dbReference>
<dbReference type="GO" id="GO:0006355">
    <property type="term" value="P:regulation of DNA-templated transcription"/>
    <property type="evidence" value="ECO:0007669"/>
    <property type="project" value="InterPro"/>
</dbReference>
<dbReference type="CDD" id="cd17627">
    <property type="entry name" value="REC_OmpR_PrrA-like"/>
    <property type="match status" value="1"/>
</dbReference>
<dbReference type="CDD" id="cd00383">
    <property type="entry name" value="trans_reg_C"/>
    <property type="match status" value="1"/>
</dbReference>
<dbReference type="FunFam" id="3.40.50.2300:FF:000103">
    <property type="entry name" value="DNA-binding response regulator PrrA"/>
    <property type="match status" value="1"/>
</dbReference>
<dbReference type="FunFam" id="1.10.10.10:FF:000005">
    <property type="entry name" value="Two-component system response regulator"/>
    <property type="match status" value="1"/>
</dbReference>
<dbReference type="Gene3D" id="3.40.50.2300">
    <property type="match status" value="1"/>
</dbReference>
<dbReference type="Gene3D" id="6.10.250.690">
    <property type="match status" value="1"/>
</dbReference>
<dbReference type="Gene3D" id="1.10.10.10">
    <property type="entry name" value="Winged helix-like DNA-binding domain superfamily/Winged helix DNA-binding domain"/>
    <property type="match status" value="1"/>
</dbReference>
<dbReference type="InterPro" id="IPR011006">
    <property type="entry name" value="CheY-like_superfamily"/>
</dbReference>
<dbReference type="InterPro" id="IPR001867">
    <property type="entry name" value="OmpR/PhoB-type_DNA-bd"/>
</dbReference>
<dbReference type="InterPro" id="IPR001789">
    <property type="entry name" value="Sig_transdc_resp-reg_receiver"/>
</dbReference>
<dbReference type="InterPro" id="IPR039420">
    <property type="entry name" value="WalR-like"/>
</dbReference>
<dbReference type="InterPro" id="IPR036388">
    <property type="entry name" value="WH-like_DNA-bd_sf"/>
</dbReference>
<dbReference type="PANTHER" id="PTHR48111">
    <property type="entry name" value="REGULATOR OF RPOS"/>
    <property type="match status" value="1"/>
</dbReference>
<dbReference type="PANTHER" id="PTHR48111:SF22">
    <property type="entry name" value="REGULATOR OF RPOS"/>
    <property type="match status" value="1"/>
</dbReference>
<dbReference type="Pfam" id="PF00072">
    <property type="entry name" value="Response_reg"/>
    <property type="match status" value="1"/>
</dbReference>
<dbReference type="Pfam" id="PF00486">
    <property type="entry name" value="Trans_reg_C"/>
    <property type="match status" value="1"/>
</dbReference>
<dbReference type="SMART" id="SM00448">
    <property type="entry name" value="REC"/>
    <property type="match status" value="1"/>
</dbReference>
<dbReference type="SMART" id="SM00862">
    <property type="entry name" value="Trans_reg_C"/>
    <property type="match status" value="1"/>
</dbReference>
<dbReference type="SUPFAM" id="SSF52172">
    <property type="entry name" value="CheY-like"/>
    <property type="match status" value="1"/>
</dbReference>
<dbReference type="PROSITE" id="PS51755">
    <property type="entry name" value="OMPR_PHOB"/>
    <property type="match status" value="1"/>
</dbReference>
<dbReference type="PROSITE" id="PS50110">
    <property type="entry name" value="RESPONSE_REGULATORY"/>
    <property type="match status" value="1"/>
</dbReference>
<keyword id="KW-0963">Cytoplasm</keyword>
<keyword id="KW-0238">DNA-binding</keyword>
<keyword id="KW-0597">Phosphoprotein</keyword>
<keyword id="KW-1185">Reference proteome</keyword>
<keyword id="KW-0804">Transcription</keyword>
<keyword id="KW-0805">Transcription regulation</keyword>
<keyword id="KW-0902">Two-component regulatory system</keyword>
<proteinExistence type="inferred from homology"/>
<sequence>MDTGVSSPRVLVVDDDSDVLASLERGLRLSGFEVSTAIDGAEALRNATETRPDAIVLDINMPVLDGVSVVTALRAMDNDVPVCVLSARSSVDDRVAGLEAGADDYLVKPFVLAELVARVKALLRRRGATATSSSETIAVGPLEVDIPGRRARVNGVDVDLTKREFDLLAVLAEHKTTVLSRAQLLELVWGYDFAADTNVVDVFIGYLRRKLEANSGPRLLHTVRGVGFVLRMQ</sequence>
<feature type="chain" id="PRO_0000081326" description="Transcriptional regulatory protein PrrA">
    <location>
        <begin position="1"/>
        <end position="233"/>
    </location>
</feature>
<feature type="domain" description="Response regulatory" evidence="2">
    <location>
        <begin position="9"/>
        <end position="123"/>
    </location>
</feature>
<feature type="DNA-binding region" description="OmpR/PhoB-type" evidence="3">
    <location>
        <begin position="134"/>
        <end position="232"/>
    </location>
</feature>
<feature type="modified residue" description="4-aspartylphosphate" evidence="2">
    <location>
        <position position="58"/>
    </location>
</feature>
<comment type="function">
    <text evidence="1">Member of the two-component regulatory system PrrB/PrrA that is involved specifically in early intracellular multiplication of Mycobacterium and is essential for its viability. Upon phosphorylation by PrrB, functions as a transcription regulator by direct binding to promoter regions of target genes to positively regulate their expression. Autoregulates its own expression.</text>
</comment>
<comment type="subcellular location">
    <subcellularLocation>
        <location evidence="4">Cytoplasm</location>
    </subcellularLocation>
</comment>
<comment type="PTM">
    <text evidence="1">Phosphorylated by PrrB at Asp-58.</text>
</comment>
<name>PRRA_MYCLE</name>
<protein>
    <recommendedName>
        <fullName>Transcriptional regulatory protein PrrA</fullName>
    </recommendedName>
</protein>
<gene>
    <name type="primary">prrA</name>
    <name type="ordered locus">ML2123</name>
    <name type="ORF">MLCB57.61c</name>
</gene>
<organism>
    <name type="scientific">Mycobacterium leprae (strain TN)</name>
    <dbReference type="NCBI Taxonomy" id="272631"/>
    <lineage>
        <taxon>Bacteria</taxon>
        <taxon>Bacillati</taxon>
        <taxon>Actinomycetota</taxon>
        <taxon>Actinomycetes</taxon>
        <taxon>Mycobacteriales</taxon>
        <taxon>Mycobacteriaceae</taxon>
        <taxon>Mycobacterium</taxon>
    </lineage>
</organism>
<reference key="1">
    <citation type="journal article" date="2001" name="Nature">
        <title>Massive gene decay in the leprosy bacillus.</title>
        <authorList>
            <person name="Cole S.T."/>
            <person name="Eiglmeier K."/>
            <person name="Parkhill J."/>
            <person name="James K.D."/>
            <person name="Thomson N.R."/>
            <person name="Wheeler P.R."/>
            <person name="Honore N."/>
            <person name="Garnier T."/>
            <person name="Churcher C.M."/>
            <person name="Harris D.E."/>
            <person name="Mungall K.L."/>
            <person name="Basham D."/>
            <person name="Brown D."/>
            <person name="Chillingworth T."/>
            <person name="Connor R."/>
            <person name="Davies R.M."/>
            <person name="Devlin K."/>
            <person name="Duthoy S."/>
            <person name="Feltwell T."/>
            <person name="Fraser A."/>
            <person name="Hamlin N."/>
            <person name="Holroyd S."/>
            <person name="Hornsby T."/>
            <person name="Jagels K."/>
            <person name="Lacroix C."/>
            <person name="Maclean J."/>
            <person name="Moule S."/>
            <person name="Murphy L.D."/>
            <person name="Oliver K."/>
            <person name="Quail M.A."/>
            <person name="Rajandream M.A."/>
            <person name="Rutherford K.M."/>
            <person name="Rutter S."/>
            <person name="Seeger K."/>
            <person name="Simon S."/>
            <person name="Simmonds M."/>
            <person name="Skelton J."/>
            <person name="Squares R."/>
            <person name="Squares S."/>
            <person name="Stevens K."/>
            <person name="Taylor K."/>
            <person name="Whitehead S."/>
            <person name="Woodward J.R."/>
            <person name="Barrell B.G."/>
        </authorList>
    </citation>
    <scope>NUCLEOTIDE SEQUENCE [LARGE SCALE GENOMIC DNA]</scope>
    <source>
        <strain>TN</strain>
    </source>
</reference>
<reference key="2">
    <citation type="submission" date="1994-09" db="EMBL/GenBank/DDBJ databases">
        <authorList>
            <person name="Smith D.R."/>
            <person name="Robison K."/>
        </authorList>
    </citation>
    <scope>NUCLEOTIDE SEQUENCE [GENOMIC DNA] OF 1-59</scope>
</reference>
<evidence type="ECO:0000250" key="1">
    <source>
        <dbReference type="UniProtKB" id="P9WGM1"/>
    </source>
</evidence>
<evidence type="ECO:0000255" key="2">
    <source>
        <dbReference type="PROSITE-ProRule" id="PRU00169"/>
    </source>
</evidence>
<evidence type="ECO:0000255" key="3">
    <source>
        <dbReference type="PROSITE-ProRule" id="PRU01091"/>
    </source>
</evidence>
<evidence type="ECO:0000305" key="4"/>
<accession>Q50136</accession>